<name>NADK_CLOBM</name>
<dbReference type="EC" id="2.7.1.23" evidence="1"/>
<dbReference type="EMBL" id="CP000962">
    <property type="protein sequence ID" value="ACA56485.1"/>
    <property type="molecule type" value="Genomic_DNA"/>
</dbReference>
<dbReference type="RefSeq" id="WP_012344350.1">
    <property type="nucleotide sequence ID" value="NC_010520.1"/>
</dbReference>
<dbReference type="SMR" id="B1KT47"/>
<dbReference type="KEGG" id="cbl:CLK_1269"/>
<dbReference type="HOGENOM" id="CLU_008831_0_1_9"/>
<dbReference type="GO" id="GO:0005737">
    <property type="term" value="C:cytoplasm"/>
    <property type="evidence" value="ECO:0007669"/>
    <property type="project" value="UniProtKB-SubCell"/>
</dbReference>
<dbReference type="GO" id="GO:0005524">
    <property type="term" value="F:ATP binding"/>
    <property type="evidence" value="ECO:0007669"/>
    <property type="project" value="UniProtKB-KW"/>
</dbReference>
<dbReference type="GO" id="GO:0046872">
    <property type="term" value="F:metal ion binding"/>
    <property type="evidence" value="ECO:0007669"/>
    <property type="project" value="UniProtKB-UniRule"/>
</dbReference>
<dbReference type="GO" id="GO:0051287">
    <property type="term" value="F:NAD binding"/>
    <property type="evidence" value="ECO:0007669"/>
    <property type="project" value="UniProtKB-ARBA"/>
</dbReference>
<dbReference type="GO" id="GO:0003951">
    <property type="term" value="F:NAD+ kinase activity"/>
    <property type="evidence" value="ECO:0007669"/>
    <property type="project" value="UniProtKB-UniRule"/>
</dbReference>
<dbReference type="GO" id="GO:0019674">
    <property type="term" value="P:NAD metabolic process"/>
    <property type="evidence" value="ECO:0007669"/>
    <property type="project" value="InterPro"/>
</dbReference>
<dbReference type="GO" id="GO:0006741">
    <property type="term" value="P:NADP biosynthetic process"/>
    <property type="evidence" value="ECO:0007669"/>
    <property type="project" value="UniProtKB-UniRule"/>
</dbReference>
<dbReference type="FunFam" id="2.60.200.30:FF:000011">
    <property type="entry name" value="NAD kinase"/>
    <property type="match status" value="1"/>
</dbReference>
<dbReference type="Gene3D" id="3.40.50.10330">
    <property type="entry name" value="Probable inorganic polyphosphate/atp-NAD kinase, domain 1"/>
    <property type="match status" value="1"/>
</dbReference>
<dbReference type="Gene3D" id="2.60.200.30">
    <property type="entry name" value="Probable inorganic polyphosphate/atp-NAD kinase, domain 2"/>
    <property type="match status" value="1"/>
</dbReference>
<dbReference type="HAMAP" id="MF_00361">
    <property type="entry name" value="NAD_kinase"/>
    <property type="match status" value="1"/>
</dbReference>
<dbReference type="InterPro" id="IPR017438">
    <property type="entry name" value="ATP-NAD_kinase_N"/>
</dbReference>
<dbReference type="InterPro" id="IPR017437">
    <property type="entry name" value="ATP-NAD_kinase_PpnK-typ_C"/>
</dbReference>
<dbReference type="InterPro" id="IPR016064">
    <property type="entry name" value="NAD/diacylglycerol_kinase_sf"/>
</dbReference>
<dbReference type="InterPro" id="IPR002504">
    <property type="entry name" value="NADK"/>
</dbReference>
<dbReference type="PANTHER" id="PTHR20275">
    <property type="entry name" value="NAD KINASE"/>
    <property type="match status" value="1"/>
</dbReference>
<dbReference type="PANTHER" id="PTHR20275:SF0">
    <property type="entry name" value="NAD KINASE"/>
    <property type="match status" value="1"/>
</dbReference>
<dbReference type="Pfam" id="PF01513">
    <property type="entry name" value="NAD_kinase"/>
    <property type="match status" value="1"/>
</dbReference>
<dbReference type="Pfam" id="PF20143">
    <property type="entry name" value="NAD_kinase_C"/>
    <property type="match status" value="1"/>
</dbReference>
<dbReference type="SUPFAM" id="SSF111331">
    <property type="entry name" value="NAD kinase/diacylglycerol kinase-like"/>
    <property type="match status" value="1"/>
</dbReference>
<feature type="chain" id="PRO_1000120847" description="NAD kinase">
    <location>
        <begin position="1"/>
        <end position="281"/>
    </location>
</feature>
<feature type="active site" description="Proton acceptor" evidence="1">
    <location>
        <position position="61"/>
    </location>
</feature>
<feature type="binding site" evidence="1">
    <location>
        <begin position="61"/>
        <end position="62"/>
    </location>
    <ligand>
        <name>NAD(+)</name>
        <dbReference type="ChEBI" id="CHEBI:57540"/>
    </ligand>
</feature>
<feature type="binding site" evidence="1">
    <location>
        <begin position="134"/>
        <end position="135"/>
    </location>
    <ligand>
        <name>NAD(+)</name>
        <dbReference type="ChEBI" id="CHEBI:57540"/>
    </ligand>
</feature>
<feature type="binding site" evidence="1">
    <location>
        <position position="145"/>
    </location>
    <ligand>
        <name>NAD(+)</name>
        <dbReference type="ChEBI" id="CHEBI:57540"/>
    </ligand>
</feature>
<feature type="binding site" evidence="1">
    <location>
        <position position="164"/>
    </location>
    <ligand>
        <name>NAD(+)</name>
        <dbReference type="ChEBI" id="CHEBI:57540"/>
    </ligand>
</feature>
<feature type="binding site" evidence="1">
    <location>
        <begin position="175"/>
        <end position="180"/>
    </location>
    <ligand>
        <name>NAD(+)</name>
        <dbReference type="ChEBI" id="CHEBI:57540"/>
    </ligand>
</feature>
<feature type="binding site" evidence="1">
    <location>
        <position position="234"/>
    </location>
    <ligand>
        <name>NAD(+)</name>
        <dbReference type="ChEBI" id="CHEBI:57540"/>
    </ligand>
</feature>
<gene>
    <name evidence="1" type="primary">nadK</name>
    <name type="ordered locus">CLK_1269</name>
</gene>
<evidence type="ECO:0000255" key="1">
    <source>
        <dbReference type="HAMAP-Rule" id="MF_00361"/>
    </source>
</evidence>
<accession>B1KT47</accession>
<keyword id="KW-0067">ATP-binding</keyword>
<keyword id="KW-0963">Cytoplasm</keyword>
<keyword id="KW-0418">Kinase</keyword>
<keyword id="KW-0520">NAD</keyword>
<keyword id="KW-0521">NADP</keyword>
<keyword id="KW-0547">Nucleotide-binding</keyword>
<keyword id="KW-0808">Transferase</keyword>
<protein>
    <recommendedName>
        <fullName evidence="1">NAD kinase</fullName>
        <ecNumber evidence="1">2.7.1.23</ecNumber>
    </recommendedName>
    <alternativeName>
        <fullName evidence="1">ATP-dependent NAD kinase</fullName>
    </alternativeName>
</protein>
<sequence>MKNIGININTDKDISRNILDKIFQYIHEECSEAKIKVFYDSKGLDNEESRALDAVMVLGGDGTILGTARALAKYDVPIFGINRGHLGFLAEIELEDCKKAIKNLFKGQYKIENRIMLKCDLKGIDKKDDFLALNDIVLTKGNLSRIVKYSIYVDDVWYTTFVADGVIVATPTGSTAYSLSAGGPIVYPDLDVLEIAPICPHSLGIRPILLNGNSKINIRVLKKYEDPVLTIDGQRYKKVTVNEVTISKSEYKCRLIKFKDKDYFKILRTKISYRSRECEGE</sequence>
<proteinExistence type="inferred from homology"/>
<reference key="1">
    <citation type="journal article" date="2007" name="PLoS ONE">
        <title>Analysis of the neurotoxin complex genes in Clostridium botulinum A1-A4 and B1 strains: BoNT/A3, /Ba4 and /B1 clusters are located within plasmids.</title>
        <authorList>
            <person name="Smith T.J."/>
            <person name="Hill K.K."/>
            <person name="Foley B.T."/>
            <person name="Detter J.C."/>
            <person name="Munk A.C."/>
            <person name="Bruce D.C."/>
            <person name="Doggett N.A."/>
            <person name="Smith L.A."/>
            <person name="Marks J.D."/>
            <person name="Xie G."/>
            <person name="Brettin T.S."/>
        </authorList>
    </citation>
    <scope>NUCLEOTIDE SEQUENCE [LARGE SCALE GENOMIC DNA]</scope>
    <source>
        <strain>Loch Maree / Type A3</strain>
    </source>
</reference>
<organism>
    <name type="scientific">Clostridium botulinum (strain Loch Maree / Type A3)</name>
    <dbReference type="NCBI Taxonomy" id="498214"/>
    <lineage>
        <taxon>Bacteria</taxon>
        <taxon>Bacillati</taxon>
        <taxon>Bacillota</taxon>
        <taxon>Clostridia</taxon>
        <taxon>Eubacteriales</taxon>
        <taxon>Clostridiaceae</taxon>
        <taxon>Clostridium</taxon>
    </lineage>
</organism>
<comment type="function">
    <text evidence="1">Involved in the regulation of the intracellular balance of NAD and NADP, and is a key enzyme in the biosynthesis of NADP. Catalyzes specifically the phosphorylation on 2'-hydroxyl of the adenosine moiety of NAD to yield NADP.</text>
</comment>
<comment type="catalytic activity">
    <reaction evidence="1">
        <text>NAD(+) + ATP = ADP + NADP(+) + H(+)</text>
        <dbReference type="Rhea" id="RHEA:18629"/>
        <dbReference type="ChEBI" id="CHEBI:15378"/>
        <dbReference type="ChEBI" id="CHEBI:30616"/>
        <dbReference type="ChEBI" id="CHEBI:57540"/>
        <dbReference type="ChEBI" id="CHEBI:58349"/>
        <dbReference type="ChEBI" id="CHEBI:456216"/>
        <dbReference type="EC" id="2.7.1.23"/>
    </reaction>
</comment>
<comment type="cofactor">
    <cofactor evidence="1">
        <name>a divalent metal cation</name>
        <dbReference type="ChEBI" id="CHEBI:60240"/>
    </cofactor>
</comment>
<comment type="subcellular location">
    <subcellularLocation>
        <location evidence="1">Cytoplasm</location>
    </subcellularLocation>
</comment>
<comment type="similarity">
    <text evidence="1">Belongs to the NAD kinase family.</text>
</comment>